<organism>
    <name type="scientific">Xylella fastidiosa (strain Temecula1 / ATCC 700964)</name>
    <dbReference type="NCBI Taxonomy" id="183190"/>
    <lineage>
        <taxon>Bacteria</taxon>
        <taxon>Pseudomonadati</taxon>
        <taxon>Pseudomonadota</taxon>
        <taxon>Gammaproteobacteria</taxon>
        <taxon>Lysobacterales</taxon>
        <taxon>Lysobacteraceae</taxon>
        <taxon>Xylella</taxon>
    </lineage>
</organism>
<evidence type="ECO:0000255" key="1">
    <source>
        <dbReference type="HAMAP-Rule" id="MF_00149"/>
    </source>
</evidence>
<evidence type="ECO:0000305" key="2"/>
<sequence length="619" mass="67529">MPIRQLPEILINQIAAGEVVERPASVVKELVENAIDAGATRVDIELEAAGVRLIRIRDNGHGMAAQELPLAVLRHATSKIASLDDLEAVATLGFRGEALPSIASVSRFTLMSRRATDEHGAVLQIEGGTLGEVIPHAHAPGTTVEVRELFYNVPARRKFLRAERTELGHIEEWARSLALAHPDLELRLSHNGKLSRRYKPGDWYSDVRLIEILGEDFAHQALRVDHSGAGLRLHGCIVQPHYSRLNADQQYLYVNGRPVRDRSVAHAVKQAYSDVLYQGRHPAYVLFLELDPARVDVNVHPAKHEVRFRDARLIHDFVYRTVQGTLAQTRAGTPPLAVGVGDVEGEGARPPGRHAVSFSGRRGGASHVLGSYSASTAPLMQGVPSVSVADAPAAYAALYAAPPTQVMDAVPQMQTGLPLAAGAGDVPLLGYAIAQLHGIYILAECADGLIVVDMHAAHERIGYERLKRAHDGIGLRTQPLLVPMTLMVAEREADVAECEAETLANLGFEVTRSGPGSLQVRSIPALLSQAEPEMLLRDVLSDLSEHGHTRRVAEARDTLLATMACHGAVRAHRRLSISEMNALLRDMEATERSGQCNHGRPTWARFSLAEIDRWFLRGR</sequence>
<protein>
    <recommendedName>
        <fullName evidence="1">DNA mismatch repair protein MutL</fullName>
    </recommendedName>
</protein>
<dbReference type="EMBL" id="AE009442">
    <property type="protein sequence ID" value="AAO29728.1"/>
    <property type="status" value="ALT_INIT"/>
    <property type="molecule type" value="Genomic_DNA"/>
</dbReference>
<dbReference type="RefSeq" id="WP_012382761.1">
    <property type="nucleotide sequence ID" value="NC_004556.1"/>
</dbReference>
<dbReference type="SMR" id="Q87AC9"/>
<dbReference type="KEGG" id="xft:PD_1897"/>
<dbReference type="HOGENOM" id="CLU_004131_4_2_6"/>
<dbReference type="Proteomes" id="UP000002516">
    <property type="component" value="Chromosome"/>
</dbReference>
<dbReference type="GO" id="GO:0032300">
    <property type="term" value="C:mismatch repair complex"/>
    <property type="evidence" value="ECO:0007669"/>
    <property type="project" value="InterPro"/>
</dbReference>
<dbReference type="GO" id="GO:0005524">
    <property type="term" value="F:ATP binding"/>
    <property type="evidence" value="ECO:0007669"/>
    <property type="project" value="InterPro"/>
</dbReference>
<dbReference type="GO" id="GO:0016887">
    <property type="term" value="F:ATP hydrolysis activity"/>
    <property type="evidence" value="ECO:0007669"/>
    <property type="project" value="InterPro"/>
</dbReference>
<dbReference type="GO" id="GO:0140664">
    <property type="term" value="F:ATP-dependent DNA damage sensor activity"/>
    <property type="evidence" value="ECO:0007669"/>
    <property type="project" value="InterPro"/>
</dbReference>
<dbReference type="GO" id="GO:0030983">
    <property type="term" value="F:mismatched DNA binding"/>
    <property type="evidence" value="ECO:0007669"/>
    <property type="project" value="InterPro"/>
</dbReference>
<dbReference type="GO" id="GO:0006298">
    <property type="term" value="P:mismatch repair"/>
    <property type="evidence" value="ECO:0007669"/>
    <property type="project" value="UniProtKB-UniRule"/>
</dbReference>
<dbReference type="CDD" id="cd16926">
    <property type="entry name" value="HATPase_MutL-MLH-PMS-like"/>
    <property type="match status" value="1"/>
</dbReference>
<dbReference type="CDD" id="cd03482">
    <property type="entry name" value="MutL_Trans_MutL"/>
    <property type="match status" value="1"/>
</dbReference>
<dbReference type="FunFam" id="3.30.230.10:FF:000013">
    <property type="entry name" value="DNA mismatch repair endonuclease MutL"/>
    <property type="match status" value="1"/>
</dbReference>
<dbReference type="FunFam" id="3.30.565.10:FF:000003">
    <property type="entry name" value="DNA mismatch repair endonuclease MutL"/>
    <property type="match status" value="1"/>
</dbReference>
<dbReference type="Gene3D" id="3.30.230.10">
    <property type="match status" value="1"/>
</dbReference>
<dbReference type="Gene3D" id="3.30.565.10">
    <property type="entry name" value="Histidine kinase-like ATPase, C-terminal domain"/>
    <property type="match status" value="1"/>
</dbReference>
<dbReference type="Gene3D" id="3.30.1540.20">
    <property type="entry name" value="MutL, C-terminal domain, dimerisation subdomain"/>
    <property type="match status" value="1"/>
</dbReference>
<dbReference type="Gene3D" id="3.30.1370.100">
    <property type="entry name" value="MutL, C-terminal domain, regulatory subdomain"/>
    <property type="match status" value="1"/>
</dbReference>
<dbReference type="HAMAP" id="MF_00149">
    <property type="entry name" value="DNA_mis_repair"/>
    <property type="match status" value="1"/>
</dbReference>
<dbReference type="InterPro" id="IPR014762">
    <property type="entry name" value="DNA_mismatch_repair_CS"/>
</dbReference>
<dbReference type="InterPro" id="IPR020667">
    <property type="entry name" value="DNA_mismatch_repair_MutL"/>
</dbReference>
<dbReference type="InterPro" id="IPR013507">
    <property type="entry name" value="DNA_mismatch_S5_2-like"/>
</dbReference>
<dbReference type="InterPro" id="IPR036890">
    <property type="entry name" value="HATPase_C_sf"/>
</dbReference>
<dbReference type="InterPro" id="IPR002099">
    <property type="entry name" value="MutL/Mlh/PMS"/>
</dbReference>
<dbReference type="InterPro" id="IPR038973">
    <property type="entry name" value="MutL/Mlh/Pms-like"/>
</dbReference>
<dbReference type="InterPro" id="IPR014790">
    <property type="entry name" value="MutL_C"/>
</dbReference>
<dbReference type="InterPro" id="IPR042120">
    <property type="entry name" value="MutL_C_dimsub"/>
</dbReference>
<dbReference type="InterPro" id="IPR042121">
    <property type="entry name" value="MutL_C_regsub"/>
</dbReference>
<dbReference type="InterPro" id="IPR037198">
    <property type="entry name" value="MutL_C_sf"/>
</dbReference>
<dbReference type="InterPro" id="IPR020568">
    <property type="entry name" value="Ribosomal_Su5_D2-typ_SF"/>
</dbReference>
<dbReference type="InterPro" id="IPR014721">
    <property type="entry name" value="Ribsml_uS5_D2-typ_fold_subgr"/>
</dbReference>
<dbReference type="NCBIfam" id="TIGR00585">
    <property type="entry name" value="mutl"/>
    <property type="match status" value="1"/>
</dbReference>
<dbReference type="NCBIfam" id="NF000949">
    <property type="entry name" value="PRK00095.1-2"/>
    <property type="match status" value="1"/>
</dbReference>
<dbReference type="PANTHER" id="PTHR10073">
    <property type="entry name" value="DNA MISMATCH REPAIR PROTEIN MLH, PMS, MUTL"/>
    <property type="match status" value="1"/>
</dbReference>
<dbReference type="PANTHER" id="PTHR10073:SF12">
    <property type="entry name" value="DNA MISMATCH REPAIR PROTEIN MLH1"/>
    <property type="match status" value="1"/>
</dbReference>
<dbReference type="Pfam" id="PF01119">
    <property type="entry name" value="DNA_mis_repair"/>
    <property type="match status" value="1"/>
</dbReference>
<dbReference type="Pfam" id="PF13589">
    <property type="entry name" value="HATPase_c_3"/>
    <property type="match status" value="1"/>
</dbReference>
<dbReference type="Pfam" id="PF08676">
    <property type="entry name" value="MutL_C"/>
    <property type="match status" value="1"/>
</dbReference>
<dbReference type="SMART" id="SM01340">
    <property type="entry name" value="DNA_mis_repair"/>
    <property type="match status" value="1"/>
</dbReference>
<dbReference type="SMART" id="SM00853">
    <property type="entry name" value="MutL_C"/>
    <property type="match status" value="1"/>
</dbReference>
<dbReference type="SUPFAM" id="SSF55874">
    <property type="entry name" value="ATPase domain of HSP90 chaperone/DNA topoisomerase II/histidine kinase"/>
    <property type="match status" value="1"/>
</dbReference>
<dbReference type="SUPFAM" id="SSF118116">
    <property type="entry name" value="DNA mismatch repair protein MutL"/>
    <property type="match status" value="1"/>
</dbReference>
<dbReference type="SUPFAM" id="SSF54211">
    <property type="entry name" value="Ribosomal protein S5 domain 2-like"/>
    <property type="match status" value="1"/>
</dbReference>
<dbReference type="PROSITE" id="PS00058">
    <property type="entry name" value="DNA_MISMATCH_REPAIR_1"/>
    <property type="match status" value="1"/>
</dbReference>
<proteinExistence type="inferred from homology"/>
<gene>
    <name evidence="1" type="primary">mutL</name>
    <name type="ordered locus">PD_1897</name>
</gene>
<name>MUTL_XYLFT</name>
<feature type="chain" id="PRO_0000177997" description="DNA mismatch repair protein MutL">
    <location>
        <begin position="1"/>
        <end position="619"/>
    </location>
</feature>
<comment type="function">
    <text evidence="1">This protein is involved in the repair of mismatches in DNA. It is required for dam-dependent methyl-directed DNA mismatch repair. May act as a 'molecular matchmaker', a protein that promotes the formation of a stable complex between two or more DNA-binding proteins in an ATP-dependent manner without itself being part of a final effector complex.</text>
</comment>
<comment type="similarity">
    <text evidence="1">Belongs to the DNA mismatch repair MutL/HexB family.</text>
</comment>
<comment type="sequence caution" evidence="2">
    <conflict type="erroneous initiation">
        <sequence resource="EMBL-CDS" id="AAO29728"/>
    </conflict>
</comment>
<accession>Q87AC9</accession>
<reference key="1">
    <citation type="journal article" date="2003" name="J. Bacteriol.">
        <title>Comparative analyses of the complete genome sequences of Pierce's disease and citrus variegated chlorosis strains of Xylella fastidiosa.</title>
        <authorList>
            <person name="Van Sluys M.A."/>
            <person name="de Oliveira M.C."/>
            <person name="Monteiro-Vitorello C.B."/>
            <person name="Miyaki C.Y."/>
            <person name="Furlan L.R."/>
            <person name="Camargo L.E.A."/>
            <person name="da Silva A.C.R."/>
            <person name="Moon D.H."/>
            <person name="Takita M.A."/>
            <person name="Lemos E.G.M."/>
            <person name="Machado M.A."/>
            <person name="Ferro M.I.T."/>
            <person name="da Silva F.R."/>
            <person name="Goldman M.H.S."/>
            <person name="Goldman G.H."/>
            <person name="Lemos M.V.F."/>
            <person name="El-Dorry H."/>
            <person name="Tsai S.M."/>
            <person name="Carrer H."/>
            <person name="Carraro D.M."/>
            <person name="de Oliveira R.C."/>
            <person name="Nunes L.R."/>
            <person name="Siqueira W.J."/>
            <person name="Coutinho L.L."/>
            <person name="Kimura E.T."/>
            <person name="Ferro E.S."/>
            <person name="Harakava R."/>
            <person name="Kuramae E.E."/>
            <person name="Marino C.L."/>
            <person name="Giglioti E."/>
            <person name="Abreu I.L."/>
            <person name="Alves L.M.C."/>
            <person name="do Amaral A.M."/>
            <person name="Baia G.S."/>
            <person name="Blanco S.R."/>
            <person name="Brito M.S."/>
            <person name="Cannavan F.S."/>
            <person name="Celestino A.V."/>
            <person name="da Cunha A.F."/>
            <person name="Fenille R.C."/>
            <person name="Ferro J.A."/>
            <person name="Formighieri E.F."/>
            <person name="Kishi L.T."/>
            <person name="Leoni S.G."/>
            <person name="Oliveira A.R."/>
            <person name="Rosa V.E. Jr."/>
            <person name="Sassaki F.T."/>
            <person name="Sena J.A.D."/>
            <person name="de Souza A.A."/>
            <person name="Truffi D."/>
            <person name="Tsukumo F."/>
            <person name="Yanai G.M."/>
            <person name="Zaros L.G."/>
            <person name="Civerolo E.L."/>
            <person name="Simpson A.J.G."/>
            <person name="Almeida N.F. Jr."/>
            <person name="Setubal J.C."/>
            <person name="Kitajima J.P."/>
        </authorList>
    </citation>
    <scope>NUCLEOTIDE SEQUENCE [LARGE SCALE GENOMIC DNA]</scope>
    <source>
        <strain>Temecula1 / ATCC 700964</strain>
    </source>
</reference>
<keyword id="KW-0227">DNA damage</keyword>
<keyword id="KW-0234">DNA repair</keyword>
<keyword id="KW-1185">Reference proteome</keyword>